<comment type="catalytic activity">
    <reaction>
        <text>a primary alcohol + NAD(+) = an aldehyde + NADH + H(+)</text>
        <dbReference type="Rhea" id="RHEA:10736"/>
        <dbReference type="ChEBI" id="CHEBI:15378"/>
        <dbReference type="ChEBI" id="CHEBI:15734"/>
        <dbReference type="ChEBI" id="CHEBI:17478"/>
        <dbReference type="ChEBI" id="CHEBI:57540"/>
        <dbReference type="ChEBI" id="CHEBI:57945"/>
        <dbReference type="EC" id="1.1.1.1"/>
    </reaction>
</comment>
<comment type="catalytic activity">
    <reaction>
        <text>a secondary alcohol + NAD(+) = a ketone + NADH + H(+)</text>
        <dbReference type="Rhea" id="RHEA:10740"/>
        <dbReference type="ChEBI" id="CHEBI:15378"/>
        <dbReference type="ChEBI" id="CHEBI:17087"/>
        <dbReference type="ChEBI" id="CHEBI:35681"/>
        <dbReference type="ChEBI" id="CHEBI:57540"/>
        <dbReference type="ChEBI" id="CHEBI:57945"/>
        <dbReference type="EC" id="1.1.1.1"/>
    </reaction>
</comment>
<comment type="cofactor">
    <cofactor evidence="1">
        <name>Zn(2+)</name>
        <dbReference type="ChEBI" id="CHEBI:29105"/>
    </cofactor>
    <text evidence="1">Binds 2 Zn(2+) ions per subunit.</text>
</comment>
<comment type="subunit">
    <text evidence="1">Homodimer.</text>
</comment>
<comment type="subcellular location">
    <subcellularLocation>
        <location evidence="1">Cytoplasm</location>
    </subcellularLocation>
</comment>
<comment type="similarity">
    <text evidence="4">Belongs to the zinc-containing alcohol dehydrogenase family. Class-I subfamily.</text>
</comment>
<accession>Q64413</accession>
<organism>
    <name type="scientific">Geomys bursarius</name>
    <name type="common">Plains pocket gopher</name>
    <name type="synonym">Mus bursarius</name>
    <dbReference type="NCBI Taxonomy" id="27682"/>
    <lineage>
        <taxon>Eukaryota</taxon>
        <taxon>Metazoa</taxon>
        <taxon>Chordata</taxon>
        <taxon>Craniata</taxon>
        <taxon>Vertebrata</taxon>
        <taxon>Euteleostomi</taxon>
        <taxon>Mammalia</taxon>
        <taxon>Eutheria</taxon>
        <taxon>Euarchontoglires</taxon>
        <taxon>Glires</taxon>
        <taxon>Rodentia</taxon>
        <taxon>Castorimorpha</taxon>
        <taxon>Geomyidae</taxon>
        <taxon>Geomys</taxon>
    </lineage>
</organism>
<sequence length="375" mass="39972">MSTAGKVIKCRAAVLWEKNKPFSIEEVEVAPPKAYEVRIKIVATGICRSDDHVVNGSIITPLPAILGHEAGGIVESIGEGVTTVKPGDKVIPLFVPQCGKCRACKHPESNLCKHGDLGRAQGTLMDGTSRFTCKGKPIHHFLGVTTFSEYTVVSEISVTKIDATSPLEKVCLIGCGFSTGYGSAVKVGKVARGSICSCVWSGRVGLSAIIGCKAAGAARIIAVDINKDKFAKAKELGATECVNPQDYDKPIYQVLQEMTDGGVDFSFEVIGRLDTMVSALMCCQESHGVSVIVGVPPNAQSLTMDPMVLLSGRSWKGAVFGGYKGKDDVPKLVADFMAKKFPLEPLITNVFPFAKINEGFDLLRAGKSIRTVLTF</sequence>
<evidence type="ECO:0000250" key="1"/>
<evidence type="ECO:0000250" key="2">
    <source>
        <dbReference type="UniProtKB" id="P00329"/>
    </source>
</evidence>
<evidence type="ECO:0000250" key="3">
    <source>
        <dbReference type="UniProtKB" id="P06757"/>
    </source>
</evidence>
<evidence type="ECO:0000305" key="4"/>
<dbReference type="EC" id="1.1.1.1"/>
<dbReference type="EMBL" id="L15466">
    <property type="protein sequence ID" value="AAA03598.1"/>
    <property type="molecule type" value="mRNA"/>
</dbReference>
<dbReference type="SMR" id="Q64413"/>
<dbReference type="GO" id="GO:0005829">
    <property type="term" value="C:cytosol"/>
    <property type="evidence" value="ECO:0007669"/>
    <property type="project" value="TreeGrafter"/>
</dbReference>
<dbReference type="GO" id="GO:0004745">
    <property type="term" value="F:all-trans-retinol dehydrogenase (NAD+) activity"/>
    <property type="evidence" value="ECO:0007669"/>
    <property type="project" value="TreeGrafter"/>
</dbReference>
<dbReference type="GO" id="GO:0008270">
    <property type="term" value="F:zinc ion binding"/>
    <property type="evidence" value="ECO:0007669"/>
    <property type="project" value="InterPro"/>
</dbReference>
<dbReference type="GO" id="GO:0042573">
    <property type="term" value="P:retinoic acid metabolic process"/>
    <property type="evidence" value="ECO:0007669"/>
    <property type="project" value="TreeGrafter"/>
</dbReference>
<dbReference type="GO" id="GO:0042572">
    <property type="term" value="P:retinol metabolic process"/>
    <property type="evidence" value="ECO:0007669"/>
    <property type="project" value="TreeGrafter"/>
</dbReference>
<dbReference type="CDD" id="cd08299">
    <property type="entry name" value="alcohol_DH_class_I_II_IV"/>
    <property type="match status" value="1"/>
</dbReference>
<dbReference type="FunFam" id="3.40.50.720:FF:000003">
    <property type="entry name" value="S-(hydroxymethyl)glutathione dehydrogenase"/>
    <property type="match status" value="1"/>
</dbReference>
<dbReference type="FunFam" id="3.90.180.10:FF:000001">
    <property type="entry name" value="S-(hydroxymethyl)glutathione dehydrogenase"/>
    <property type="match status" value="1"/>
</dbReference>
<dbReference type="Gene3D" id="3.90.180.10">
    <property type="entry name" value="Medium-chain alcohol dehydrogenases, catalytic domain"/>
    <property type="match status" value="1"/>
</dbReference>
<dbReference type="Gene3D" id="3.40.50.720">
    <property type="entry name" value="NAD(P)-binding Rossmann-like Domain"/>
    <property type="match status" value="1"/>
</dbReference>
<dbReference type="InterPro" id="IPR013149">
    <property type="entry name" value="ADH-like_C"/>
</dbReference>
<dbReference type="InterPro" id="IPR013154">
    <property type="entry name" value="ADH-like_N"/>
</dbReference>
<dbReference type="InterPro" id="IPR002328">
    <property type="entry name" value="ADH_Zn_CS"/>
</dbReference>
<dbReference type="InterPro" id="IPR011032">
    <property type="entry name" value="GroES-like_sf"/>
</dbReference>
<dbReference type="InterPro" id="IPR036291">
    <property type="entry name" value="NAD(P)-bd_dom_sf"/>
</dbReference>
<dbReference type="InterPro" id="IPR020843">
    <property type="entry name" value="PKS_ER"/>
</dbReference>
<dbReference type="PANTHER" id="PTHR43880">
    <property type="entry name" value="ALCOHOL DEHYDROGENASE"/>
    <property type="match status" value="1"/>
</dbReference>
<dbReference type="PANTHER" id="PTHR43880:SF1">
    <property type="entry name" value="ALCOHOL DEHYDROGENASE 1A"/>
    <property type="match status" value="1"/>
</dbReference>
<dbReference type="Pfam" id="PF08240">
    <property type="entry name" value="ADH_N"/>
    <property type="match status" value="1"/>
</dbReference>
<dbReference type="Pfam" id="PF00107">
    <property type="entry name" value="ADH_zinc_N"/>
    <property type="match status" value="1"/>
</dbReference>
<dbReference type="SMART" id="SM00829">
    <property type="entry name" value="PKS_ER"/>
    <property type="match status" value="1"/>
</dbReference>
<dbReference type="SUPFAM" id="SSF50129">
    <property type="entry name" value="GroES-like"/>
    <property type="match status" value="2"/>
</dbReference>
<dbReference type="SUPFAM" id="SSF51735">
    <property type="entry name" value="NAD(P)-binding Rossmann-fold domains"/>
    <property type="match status" value="1"/>
</dbReference>
<dbReference type="PROSITE" id="PS00059">
    <property type="entry name" value="ADH_ZINC"/>
    <property type="match status" value="1"/>
</dbReference>
<keyword id="KW-0007">Acetylation</keyword>
<keyword id="KW-0963">Cytoplasm</keyword>
<keyword id="KW-0479">Metal-binding</keyword>
<keyword id="KW-0520">NAD</keyword>
<keyword id="KW-0560">Oxidoreductase</keyword>
<keyword id="KW-0862">Zinc</keyword>
<gene>
    <name type="primary">ADH1</name>
</gene>
<name>ADH1_GEOBU</name>
<feature type="initiator methionine" description="Removed" evidence="3">
    <location>
        <position position="1"/>
    </location>
</feature>
<feature type="chain" id="PRO_0000160654" description="Alcohol dehydrogenase 1">
    <location>
        <begin position="2"/>
        <end position="375"/>
    </location>
</feature>
<feature type="binding site" evidence="1">
    <location>
        <position position="47"/>
    </location>
    <ligand>
        <name>Zn(2+)</name>
        <dbReference type="ChEBI" id="CHEBI:29105"/>
        <label>1</label>
        <note>catalytic</note>
    </ligand>
</feature>
<feature type="binding site" evidence="1">
    <location>
        <position position="68"/>
    </location>
    <ligand>
        <name>Zn(2+)</name>
        <dbReference type="ChEBI" id="CHEBI:29105"/>
        <label>1</label>
        <note>catalytic</note>
    </ligand>
</feature>
<feature type="binding site" evidence="1">
    <location>
        <position position="98"/>
    </location>
    <ligand>
        <name>Zn(2+)</name>
        <dbReference type="ChEBI" id="CHEBI:29105"/>
        <label>2</label>
    </ligand>
</feature>
<feature type="binding site" evidence="1">
    <location>
        <position position="101"/>
    </location>
    <ligand>
        <name>Zn(2+)</name>
        <dbReference type="ChEBI" id="CHEBI:29105"/>
        <label>2</label>
    </ligand>
</feature>
<feature type="binding site" evidence="1">
    <location>
        <position position="104"/>
    </location>
    <ligand>
        <name>Zn(2+)</name>
        <dbReference type="ChEBI" id="CHEBI:29105"/>
        <label>2</label>
    </ligand>
</feature>
<feature type="binding site" evidence="1">
    <location>
        <position position="112"/>
    </location>
    <ligand>
        <name>Zn(2+)</name>
        <dbReference type="ChEBI" id="CHEBI:29105"/>
        <label>2</label>
    </ligand>
</feature>
<feature type="binding site" evidence="1">
    <location>
        <position position="175"/>
    </location>
    <ligand>
        <name>Zn(2+)</name>
        <dbReference type="ChEBI" id="CHEBI:29105"/>
        <label>1</label>
        <note>catalytic</note>
    </ligand>
</feature>
<feature type="binding site" evidence="1">
    <location>
        <begin position="200"/>
        <end position="205"/>
    </location>
    <ligand>
        <name>NAD(+)</name>
        <dbReference type="ChEBI" id="CHEBI:57540"/>
    </ligand>
</feature>
<feature type="binding site" evidence="1">
    <location>
        <position position="224"/>
    </location>
    <ligand>
        <name>NAD(+)</name>
        <dbReference type="ChEBI" id="CHEBI:57540"/>
    </ligand>
</feature>
<feature type="binding site" evidence="1">
    <location>
        <position position="229"/>
    </location>
    <ligand>
        <name>NAD(+)</name>
        <dbReference type="ChEBI" id="CHEBI:57540"/>
    </ligand>
</feature>
<feature type="binding site" evidence="1">
    <location>
        <begin position="293"/>
        <end position="295"/>
    </location>
    <ligand>
        <name>NAD(+)</name>
        <dbReference type="ChEBI" id="CHEBI:57540"/>
    </ligand>
</feature>
<feature type="binding site" evidence="1">
    <location>
        <position position="370"/>
    </location>
    <ligand>
        <name>NAD(+)</name>
        <dbReference type="ChEBI" id="CHEBI:57540"/>
    </ligand>
</feature>
<feature type="modified residue" description="N-acetylserine" evidence="3">
    <location>
        <position position="2"/>
    </location>
</feature>
<feature type="modified residue" description="N6-succinyllysine" evidence="2">
    <location>
        <position position="234"/>
    </location>
</feature>
<feature type="modified residue" description="N6-succinyllysine" evidence="2">
    <location>
        <position position="340"/>
    </location>
</feature>
<reference key="1">
    <citation type="journal article" date="1993" name="Proc. Natl. Acad. Sci. U.S.A.">
        <title>Origin of a novel allele in a mammalian hybrid zone.</title>
        <authorList>
            <person name="Bradley R.D."/>
            <person name="Bull J.J."/>
            <person name="Johnson A.D."/>
            <person name="Hillis D.M."/>
        </authorList>
    </citation>
    <scope>NUCLEOTIDE SEQUENCE [MRNA]</scope>
    <source>
        <strain>Isolate TK 30723</strain>
        <tissue>Liver</tissue>
    </source>
</reference>
<protein>
    <recommendedName>
        <fullName>Alcohol dehydrogenase 1</fullName>
        <ecNumber>1.1.1.1</ecNumber>
    </recommendedName>
    <alternativeName>
        <fullName>Alcohol dehydrogenase A subunit</fullName>
    </alternativeName>
</protein>
<proteinExistence type="evidence at transcript level"/>